<accession>Q6HHX9</accession>
<name>T23O_BACHK</name>
<gene>
    <name evidence="1" type="primary">kynA</name>
    <name type="ordered locus">BT9727_2521</name>
</gene>
<proteinExistence type="inferred from homology"/>
<dbReference type="EC" id="1.13.11.11" evidence="1"/>
<dbReference type="EMBL" id="AE017355">
    <property type="protein sequence ID" value="AAT61838.1"/>
    <property type="molecule type" value="Genomic_DNA"/>
</dbReference>
<dbReference type="RefSeq" id="WP_000661971.1">
    <property type="nucleotide sequence ID" value="NC_005957.1"/>
</dbReference>
<dbReference type="RefSeq" id="YP_036847.1">
    <property type="nucleotide sequence ID" value="NC_005957.1"/>
</dbReference>
<dbReference type="SMR" id="Q6HHX9"/>
<dbReference type="KEGG" id="btk:BT9727_2521"/>
<dbReference type="PATRIC" id="fig|281309.8.peg.2669"/>
<dbReference type="HOGENOM" id="CLU_063240_0_0_9"/>
<dbReference type="UniPathway" id="UPA00333">
    <property type="reaction ID" value="UER00453"/>
</dbReference>
<dbReference type="Proteomes" id="UP000001301">
    <property type="component" value="Chromosome"/>
</dbReference>
<dbReference type="GO" id="GO:0020037">
    <property type="term" value="F:heme binding"/>
    <property type="evidence" value="ECO:0000250"/>
    <property type="project" value="UniProtKB"/>
</dbReference>
<dbReference type="GO" id="GO:0046872">
    <property type="term" value="F:metal ion binding"/>
    <property type="evidence" value="ECO:0007669"/>
    <property type="project" value="UniProtKB-KW"/>
</dbReference>
<dbReference type="GO" id="GO:0004833">
    <property type="term" value="F:tryptophan 2,3-dioxygenase activity"/>
    <property type="evidence" value="ECO:0000250"/>
    <property type="project" value="UniProtKB"/>
</dbReference>
<dbReference type="GO" id="GO:0019442">
    <property type="term" value="P:L-tryptophan catabolic process to acetyl-CoA"/>
    <property type="evidence" value="ECO:0007669"/>
    <property type="project" value="TreeGrafter"/>
</dbReference>
<dbReference type="GO" id="GO:0019441">
    <property type="term" value="P:L-tryptophan catabolic process to kynurenine"/>
    <property type="evidence" value="ECO:0000250"/>
    <property type="project" value="UniProtKB"/>
</dbReference>
<dbReference type="FunFam" id="1.20.58.480:FF:000001">
    <property type="entry name" value="Tryptophan 2,3-dioxygenase"/>
    <property type="match status" value="1"/>
</dbReference>
<dbReference type="Gene3D" id="1.20.58.480">
    <property type="match status" value="1"/>
</dbReference>
<dbReference type="HAMAP" id="MF_01972">
    <property type="entry name" value="T23O"/>
    <property type="match status" value="1"/>
</dbReference>
<dbReference type="InterPro" id="IPR037217">
    <property type="entry name" value="Trp/Indoleamine_2_3_dOase-like"/>
</dbReference>
<dbReference type="InterPro" id="IPR017485">
    <property type="entry name" value="Trp_2-3-dOase_bac"/>
</dbReference>
<dbReference type="InterPro" id="IPR004981">
    <property type="entry name" value="Trp_2_3_dOase"/>
</dbReference>
<dbReference type="NCBIfam" id="TIGR03036">
    <property type="entry name" value="trp_2_3_diox"/>
    <property type="match status" value="1"/>
</dbReference>
<dbReference type="PANTHER" id="PTHR10138">
    <property type="entry name" value="TRYPTOPHAN 2,3-DIOXYGENASE"/>
    <property type="match status" value="1"/>
</dbReference>
<dbReference type="PANTHER" id="PTHR10138:SF0">
    <property type="entry name" value="TRYPTOPHAN 2,3-DIOXYGENASE"/>
    <property type="match status" value="1"/>
</dbReference>
<dbReference type="Pfam" id="PF03301">
    <property type="entry name" value="Trp_dioxygenase"/>
    <property type="match status" value="1"/>
</dbReference>
<dbReference type="SUPFAM" id="SSF140959">
    <property type="entry name" value="Indolic compounds 2,3-dioxygenase-like"/>
    <property type="match status" value="1"/>
</dbReference>
<evidence type="ECO:0000255" key="1">
    <source>
        <dbReference type="HAMAP-Rule" id="MF_01972"/>
    </source>
</evidence>
<protein>
    <recommendedName>
        <fullName evidence="1">Tryptophan 2,3-dioxygenase</fullName>
        <shortName evidence="1">TDO</shortName>
        <ecNumber evidence="1">1.13.11.11</ecNumber>
    </recommendedName>
    <alternativeName>
        <fullName evidence="1">Tryptamin 2,3-dioxygenase</fullName>
    </alternativeName>
    <alternativeName>
        <fullName evidence="1">Tryptophan oxygenase</fullName>
        <shortName evidence="1">TO</shortName>
        <shortName evidence="1">TRPO</shortName>
    </alternativeName>
    <alternativeName>
        <fullName evidence="1">Tryptophan pyrrolase</fullName>
    </alternativeName>
    <alternativeName>
        <fullName evidence="1">Tryptophanase</fullName>
    </alternativeName>
</protein>
<comment type="function">
    <text evidence="1">Heme-dependent dioxygenase that catalyzes the oxidative cleavage of the L-tryptophan (L-Trp) pyrrole ring and converts L-tryptophan to N-formyl-L-kynurenine. Catalyzes the oxidative cleavage of the indole moiety.</text>
</comment>
<comment type="catalytic activity">
    <reaction evidence="1">
        <text>L-tryptophan + O2 = N-formyl-L-kynurenine</text>
        <dbReference type="Rhea" id="RHEA:24536"/>
        <dbReference type="ChEBI" id="CHEBI:15379"/>
        <dbReference type="ChEBI" id="CHEBI:57912"/>
        <dbReference type="ChEBI" id="CHEBI:58629"/>
        <dbReference type="EC" id="1.13.11.11"/>
    </reaction>
</comment>
<comment type="cofactor">
    <cofactor evidence="1">
        <name>heme</name>
        <dbReference type="ChEBI" id="CHEBI:30413"/>
    </cofactor>
    <text evidence="1">Binds 1 heme group per subunit.</text>
</comment>
<comment type="pathway">
    <text evidence="1">Amino-acid degradation; L-tryptophan degradation via kynurenine pathway; L-kynurenine from L-tryptophan: step 1/2.</text>
</comment>
<comment type="subunit">
    <text evidence="1">Homotetramer.</text>
</comment>
<comment type="similarity">
    <text evidence="1">Belongs to the tryptophan 2,3-dioxygenase family.</text>
</comment>
<feature type="chain" id="PRO_0000360087" description="Tryptophan 2,3-dioxygenase">
    <location>
        <begin position="1"/>
        <end position="279"/>
    </location>
</feature>
<feature type="binding site" evidence="1">
    <location>
        <begin position="48"/>
        <end position="52"/>
    </location>
    <ligand>
        <name>substrate</name>
    </ligand>
</feature>
<feature type="binding site" evidence="1">
    <location>
        <position position="110"/>
    </location>
    <ligand>
        <name>substrate</name>
    </ligand>
</feature>
<feature type="binding site" evidence="1">
    <location>
        <position position="114"/>
    </location>
    <ligand>
        <name>substrate</name>
    </ligand>
</feature>
<feature type="binding site" description="axial binding residue" evidence="1">
    <location>
        <position position="237"/>
    </location>
    <ligand>
        <name>heme</name>
        <dbReference type="ChEBI" id="CHEBI:30413"/>
    </ligand>
    <ligandPart>
        <name>Fe</name>
        <dbReference type="ChEBI" id="CHEBI:18248"/>
    </ligandPart>
</feature>
<feature type="binding site" evidence="1">
    <location>
        <position position="251"/>
    </location>
    <ligand>
        <name>substrate</name>
    </ligand>
</feature>
<organism>
    <name type="scientific">Bacillus thuringiensis subsp. konkukian (strain 97-27)</name>
    <dbReference type="NCBI Taxonomy" id="281309"/>
    <lineage>
        <taxon>Bacteria</taxon>
        <taxon>Bacillati</taxon>
        <taxon>Bacillota</taxon>
        <taxon>Bacilli</taxon>
        <taxon>Bacillales</taxon>
        <taxon>Bacillaceae</taxon>
        <taxon>Bacillus</taxon>
        <taxon>Bacillus cereus group</taxon>
    </lineage>
</organism>
<sequence length="279" mass="32780">MKENEKVIMEKGIHTDFKENMTYGEYLQLDSLLSSQKRLSDHHDEMLFIVIHQASELWMKLILHELNAAIESIKQDKLQPAFKMLARVSKIQSQIIQSWDILATLTPSEYIEFRDSLGQASGFQSYQYRMIEYALGYKTPHALKIYEKDQELHARLHTALHAPSLYDVAIQALVKEGFSIHKDVLNRDITQPYEEDATVEAAWLEVYADVKKYWNLYQLAEKLIDIEDWLQQWRFRHMKTVERIIGHKMGTGGSSGVSYLKRVLDQRFFPELWNVRTKL</sequence>
<keyword id="KW-0223">Dioxygenase</keyword>
<keyword id="KW-0349">Heme</keyword>
<keyword id="KW-0408">Iron</keyword>
<keyword id="KW-0479">Metal-binding</keyword>
<keyword id="KW-0560">Oxidoreductase</keyword>
<keyword id="KW-0823">Tryptophan catabolism</keyword>
<reference key="1">
    <citation type="journal article" date="2006" name="J. Bacteriol.">
        <title>Pathogenomic sequence analysis of Bacillus cereus and Bacillus thuringiensis isolates closely related to Bacillus anthracis.</title>
        <authorList>
            <person name="Han C.S."/>
            <person name="Xie G."/>
            <person name="Challacombe J.F."/>
            <person name="Altherr M.R."/>
            <person name="Bhotika S.S."/>
            <person name="Bruce D."/>
            <person name="Campbell C.S."/>
            <person name="Campbell M.L."/>
            <person name="Chen J."/>
            <person name="Chertkov O."/>
            <person name="Cleland C."/>
            <person name="Dimitrijevic M."/>
            <person name="Doggett N.A."/>
            <person name="Fawcett J.J."/>
            <person name="Glavina T."/>
            <person name="Goodwin L.A."/>
            <person name="Hill K.K."/>
            <person name="Hitchcock P."/>
            <person name="Jackson P.J."/>
            <person name="Keim P."/>
            <person name="Kewalramani A.R."/>
            <person name="Longmire J."/>
            <person name="Lucas S."/>
            <person name="Malfatti S."/>
            <person name="McMurry K."/>
            <person name="Meincke L.J."/>
            <person name="Misra M."/>
            <person name="Moseman B.L."/>
            <person name="Mundt M."/>
            <person name="Munk A.C."/>
            <person name="Okinaka R.T."/>
            <person name="Parson-Quintana B."/>
            <person name="Reilly L.P."/>
            <person name="Richardson P."/>
            <person name="Robinson D.L."/>
            <person name="Rubin E."/>
            <person name="Saunders E."/>
            <person name="Tapia R."/>
            <person name="Tesmer J.G."/>
            <person name="Thayer N."/>
            <person name="Thompson L.S."/>
            <person name="Tice H."/>
            <person name="Ticknor L.O."/>
            <person name="Wills P.L."/>
            <person name="Brettin T.S."/>
            <person name="Gilna P."/>
        </authorList>
    </citation>
    <scope>NUCLEOTIDE SEQUENCE [LARGE SCALE GENOMIC DNA]</scope>
    <source>
        <strain>97-27</strain>
    </source>
</reference>